<gene>
    <name type="primary">Ndufa13</name>
    <name type="synonym">Grim19</name>
</gene>
<evidence type="ECO:0000250" key="1">
    <source>
        <dbReference type="UniProtKB" id="Q95KV7"/>
    </source>
</evidence>
<evidence type="ECO:0000250" key="2">
    <source>
        <dbReference type="UniProtKB" id="Q9P0J0"/>
    </source>
</evidence>
<evidence type="ECO:0000255" key="3"/>
<evidence type="ECO:0000269" key="4">
    <source>
    </source>
</evidence>
<evidence type="ECO:0000269" key="5">
    <source>
    </source>
</evidence>
<evidence type="ECO:0000305" key="6"/>
<evidence type="ECO:0000305" key="7">
    <source>
    </source>
</evidence>
<evidence type="ECO:0007744" key="8">
    <source>
        <dbReference type="PDB" id="8PW5"/>
    </source>
</evidence>
<evidence type="ECO:0007829" key="9">
    <source>
        <dbReference type="PDB" id="8IBE"/>
    </source>
</evidence>
<evidence type="ECO:0007829" key="10">
    <source>
        <dbReference type="PDB" id="8OM1"/>
    </source>
</evidence>
<evidence type="ECO:0007829" key="11">
    <source>
        <dbReference type="PDB" id="8RGP"/>
    </source>
</evidence>
<accession>Q9ERS2</accession>
<accession>Q9DC98</accession>
<accession>Q9DCA1</accession>
<keyword id="KW-0002">3D-structure</keyword>
<keyword id="KW-0007">Acetylation</keyword>
<keyword id="KW-0053">Apoptosis</keyword>
<keyword id="KW-0903">Direct protein sequencing</keyword>
<keyword id="KW-0249">Electron transport</keyword>
<keyword id="KW-0472">Membrane</keyword>
<keyword id="KW-0496">Mitochondrion</keyword>
<keyword id="KW-0999">Mitochondrion inner membrane</keyword>
<keyword id="KW-0539">Nucleus</keyword>
<keyword id="KW-1185">Reference proteome</keyword>
<keyword id="KW-0679">Respiratory chain</keyword>
<keyword id="KW-0812">Transmembrane</keyword>
<keyword id="KW-1133">Transmembrane helix</keyword>
<keyword id="KW-0813">Transport</keyword>
<sequence length="144" mass="16860">MAASKVKQDMPPPGGYGPIDYKRNLPRRGLSGYSMFAVGIGALIFGYWRMMRWNQERRRLLIEDLEARIALMPLFQAEKDRRTLQILRENLEEEAIIMKDVPNWKVGESVFHTTRWVPPLIGEMYGLRTKEEMSNANFGFTWYT</sequence>
<dbReference type="EMBL" id="AF286698">
    <property type="protein sequence ID" value="AAG28168.1"/>
    <property type="molecule type" value="mRNA"/>
</dbReference>
<dbReference type="EMBL" id="AK012422">
    <property type="protein sequence ID" value="BAB28227.1"/>
    <property type="molecule type" value="mRNA"/>
</dbReference>
<dbReference type="EMBL" id="AK010517">
    <property type="protein sequence ID" value="BAB26999.1"/>
    <property type="molecule type" value="mRNA"/>
</dbReference>
<dbReference type="EMBL" id="AK002999">
    <property type="protein sequence ID" value="BAB22505.1"/>
    <property type="status" value="ALT_INIT"/>
    <property type="molecule type" value="mRNA"/>
</dbReference>
<dbReference type="EMBL" id="AK003012">
    <property type="status" value="NOT_ANNOTATED_CDS"/>
    <property type="molecule type" value="mRNA"/>
</dbReference>
<dbReference type="EMBL" id="BC034899">
    <property type="protein sequence ID" value="AAH34899.1"/>
    <property type="molecule type" value="mRNA"/>
</dbReference>
<dbReference type="EMBL" id="BC037149">
    <property type="protein sequence ID" value="AAH37149.1"/>
    <property type="molecule type" value="mRNA"/>
</dbReference>
<dbReference type="EMBL" id="BC055435">
    <property type="protein sequence ID" value="AAH55435.1"/>
    <property type="molecule type" value="mRNA"/>
</dbReference>
<dbReference type="CCDS" id="CCDS22353.1"/>
<dbReference type="RefSeq" id="NP_001369144.1">
    <property type="nucleotide sequence ID" value="NM_001382215.1"/>
</dbReference>
<dbReference type="RefSeq" id="NP_001408485.1">
    <property type="nucleotide sequence ID" value="NM_001421556.1"/>
</dbReference>
<dbReference type="RefSeq" id="NP_075801.1">
    <property type="nucleotide sequence ID" value="NM_023312.3"/>
</dbReference>
<dbReference type="RefSeq" id="XP_017168432.1">
    <property type="nucleotide sequence ID" value="XM_017312943.1"/>
</dbReference>
<dbReference type="PDB" id="6G2J">
    <property type="method" value="EM"/>
    <property type="resolution" value="3.30 A"/>
    <property type="chains" value="Z=1-144"/>
</dbReference>
<dbReference type="PDB" id="6G72">
    <property type="method" value="EM"/>
    <property type="resolution" value="3.90 A"/>
    <property type="chains" value="Z=1-144"/>
</dbReference>
<dbReference type="PDB" id="6ZR2">
    <property type="method" value="EM"/>
    <property type="resolution" value="3.10 A"/>
    <property type="chains" value="Z=1-144"/>
</dbReference>
<dbReference type="PDB" id="6ZTQ">
    <property type="method" value="EM"/>
    <property type="resolution" value="3.00 A"/>
    <property type="chains" value="Z=1-144"/>
</dbReference>
<dbReference type="PDB" id="7AK5">
    <property type="method" value="EM"/>
    <property type="resolution" value="3.17 A"/>
    <property type="chains" value="Z=1-144"/>
</dbReference>
<dbReference type="PDB" id="7AK6">
    <property type="method" value="EM"/>
    <property type="resolution" value="3.82 A"/>
    <property type="chains" value="Z=1-144"/>
</dbReference>
<dbReference type="PDB" id="7B93">
    <property type="method" value="EM"/>
    <property type="resolution" value="3.04 A"/>
    <property type="chains" value="Z=1-144"/>
</dbReference>
<dbReference type="PDB" id="7PSA">
    <property type="method" value="EM"/>
    <property type="resolution" value="3.40 A"/>
    <property type="chains" value="Z=1-144"/>
</dbReference>
<dbReference type="PDB" id="8C2S">
    <property type="method" value="EM"/>
    <property type="resolution" value="3.90 A"/>
    <property type="chains" value="Z=1-144"/>
</dbReference>
<dbReference type="PDB" id="8CA3">
    <property type="method" value="EM"/>
    <property type="resolution" value="3.20 A"/>
    <property type="chains" value="Z=1-144"/>
</dbReference>
<dbReference type="PDB" id="8CA5">
    <property type="method" value="EM"/>
    <property type="resolution" value="3.90 A"/>
    <property type="chains" value="Z=1-144"/>
</dbReference>
<dbReference type="PDB" id="8IAO">
    <property type="method" value="EM"/>
    <property type="resolution" value="4.20 A"/>
    <property type="chains" value="Z=1-144"/>
</dbReference>
<dbReference type="PDB" id="8IAP">
    <property type="method" value="EM"/>
    <property type="resolution" value="3.20 A"/>
    <property type="chains" value="Z=1-144"/>
</dbReference>
<dbReference type="PDB" id="8IB4">
    <property type="method" value="EM"/>
    <property type="resolution" value="4.30 A"/>
    <property type="chains" value="Z=1-144"/>
</dbReference>
<dbReference type="PDB" id="8IB5">
    <property type="method" value="EM"/>
    <property type="resolution" value="3.30 A"/>
    <property type="chains" value="Z=1-144"/>
</dbReference>
<dbReference type="PDB" id="8IB9">
    <property type="method" value="EM"/>
    <property type="resolution" value="4.30 A"/>
    <property type="chains" value="Z=1-144"/>
</dbReference>
<dbReference type="PDB" id="8IBA">
    <property type="method" value="EM"/>
    <property type="resolution" value="3.20 A"/>
    <property type="chains" value="Z=1-144"/>
</dbReference>
<dbReference type="PDB" id="8IBD">
    <property type="method" value="EM"/>
    <property type="resolution" value="4.20 A"/>
    <property type="chains" value="Z=1-144"/>
</dbReference>
<dbReference type="PDB" id="8IBE">
    <property type="method" value="EM"/>
    <property type="resolution" value="3.30 A"/>
    <property type="chains" value="Z=1-144"/>
</dbReference>
<dbReference type="PDB" id="8IC2">
    <property type="method" value="EM"/>
    <property type="resolution" value="6.30 A"/>
    <property type="chains" value="Z=1-144"/>
</dbReference>
<dbReference type="PDB" id="8IC3">
    <property type="method" value="EM"/>
    <property type="resolution" value="3.20 A"/>
    <property type="chains" value="Z=1-144"/>
</dbReference>
<dbReference type="PDB" id="8OLT">
    <property type="method" value="EM"/>
    <property type="resolution" value="2.84 A"/>
    <property type="chains" value="Z=1-144"/>
</dbReference>
<dbReference type="PDB" id="8OM1">
    <property type="method" value="EM"/>
    <property type="resolution" value="2.39 A"/>
    <property type="chains" value="Z=1-144"/>
</dbReference>
<dbReference type="PDB" id="8PW5">
    <property type="method" value="EM"/>
    <property type="resolution" value="3.60 A"/>
    <property type="chains" value="Z1=1-144"/>
</dbReference>
<dbReference type="PDB" id="8PW6">
    <property type="method" value="EM"/>
    <property type="resolution" value="3.30 A"/>
    <property type="chains" value="Z1=1-144"/>
</dbReference>
<dbReference type="PDB" id="8PW7">
    <property type="method" value="EM"/>
    <property type="resolution" value="3.50 A"/>
    <property type="chains" value="Z1=1-144"/>
</dbReference>
<dbReference type="PDB" id="8RGP">
    <property type="method" value="EM"/>
    <property type="resolution" value="3.00 A"/>
    <property type="chains" value="Z=1-144"/>
</dbReference>
<dbReference type="PDB" id="8RGQ">
    <property type="method" value="EM"/>
    <property type="resolution" value="3.00 A"/>
    <property type="chains" value="Z=1-144"/>
</dbReference>
<dbReference type="PDB" id="8RGR">
    <property type="method" value="EM"/>
    <property type="resolution" value="2.90 A"/>
    <property type="chains" value="Z=1-144"/>
</dbReference>
<dbReference type="PDB" id="8RGT">
    <property type="method" value="EM"/>
    <property type="resolution" value="3.10 A"/>
    <property type="chains" value="Z=1-144"/>
</dbReference>
<dbReference type="PDB" id="8UCA">
    <property type="method" value="EM"/>
    <property type="resolution" value="3.70 A"/>
    <property type="chains" value="AO/ao=1-144"/>
</dbReference>
<dbReference type="PDB" id="8XNL">
    <property type="method" value="EM"/>
    <property type="resolution" value="3.10 A"/>
    <property type="chains" value="Z=1-144"/>
</dbReference>
<dbReference type="PDB" id="8XNM">
    <property type="method" value="EM"/>
    <property type="resolution" value="3.50 A"/>
    <property type="chains" value="Z=1-144"/>
</dbReference>
<dbReference type="PDB" id="8XNN">
    <property type="method" value="EM"/>
    <property type="resolution" value="3.60 A"/>
    <property type="chains" value="Z=1-144"/>
</dbReference>
<dbReference type="PDB" id="8XNO">
    <property type="method" value="EM"/>
    <property type="resolution" value="3.40 A"/>
    <property type="chains" value="Z=1-144"/>
</dbReference>
<dbReference type="PDB" id="8XNP">
    <property type="method" value="EM"/>
    <property type="resolution" value="3.50 A"/>
    <property type="chains" value="Z=1-144"/>
</dbReference>
<dbReference type="PDB" id="8XNQ">
    <property type="method" value="EM"/>
    <property type="resolution" value="3.70 A"/>
    <property type="chains" value="Z=1-144"/>
</dbReference>
<dbReference type="PDB" id="8XNR">
    <property type="method" value="EM"/>
    <property type="resolution" value="3.30 A"/>
    <property type="chains" value="Z=1-144"/>
</dbReference>
<dbReference type="PDB" id="8XNS">
    <property type="method" value="EM"/>
    <property type="resolution" value="3.50 A"/>
    <property type="chains" value="Z=1-144"/>
</dbReference>
<dbReference type="PDB" id="8XNT">
    <property type="method" value="EM"/>
    <property type="resolution" value="4.10 A"/>
    <property type="chains" value="Z=1-144"/>
</dbReference>
<dbReference type="PDB" id="8XNU">
    <property type="method" value="EM"/>
    <property type="resolution" value="3.60 A"/>
    <property type="chains" value="Z=1-144"/>
</dbReference>
<dbReference type="PDB" id="8XNV">
    <property type="method" value="EM"/>
    <property type="resolution" value="3.30 A"/>
    <property type="chains" value="Z=1-144"/>
</dbReference>
<dbReference type="PDB" id="8XNW">
    <property type="method" value="EM"/>
    <property type="resolution" value="3.60 A"/>
    <property type="chains" value="Z=1-144"/>
</dbReference>
<dbReference type="PDB" id="8XNX">
    <property type="method" value="EM"/>
    <property type="resolution" value="3.50 A"/>
    <property type="chains" value="Z=1-144"/>
</dbReference>
<dbReference type="PDB" id="8XNY">
    <property type="method" value="EM"/>
    <property type="resolution" value="4.10 A"/>
    <property type="chains" value="Z=1-144"/>
</dbReference>
<dbReference type="PDB" id="8XNZ">
    <property type="method" value="EM"/>
    <property type="resolution" value="3.30 A"/>
    <property type="chains" value="Z=1-144"/>
</dbReference>
<dbReference type="PDB" id="8XO0">
    <property type="method" value="EM"/>
    <property type="resolution" value="4.20 A"/>
    <property type="chains" value="Z=1-144"/>
</dbReference>
<dbReference type="PDBsum" id="6G2J"/>
<dbReference type="PDBsum" id="6G72"/>
<dbReference type="PDBsum" id="6ZR2"/>
<dbReference type="PDBsum" id="6ZTQ"/>
<dbReference type="PDBsum" id="7AK5"/>
<dbReference type="PDBsum" id="7AK6"/>
<dbReference type="PDBsum" id="7B93"/>
<dbReference type="PDBsum" id="7PSA"/>
<dbReference type="PDBsum" id="8C2S"/>
<dbReference type="PDBsum" id="8CA3"/>
<dbReference type="PDBsum" id="8CA5"/>
<dbReference type="PDBsum" id="8IAO"/>
<dbReference type="PDBsum" id="8IAP"/>
<dbReference type="PDBsum" id="8IB4"/>
<dbReference type="PDBsum" id="8IB5"/>
<dbReference type="PDBsum" id="8IB9"/>
<dbReference type="PDBsum" id="8IBA"/>
<dbReference type="PDBsum" id="8IBD"/>
<dbReference type="PDBsum" id="8IBE"/>
<dbReference type="PDBsum" id="8IC2"/>
<dbReference type="PDBsum" id="8IC3"/>
<dbReference type="PDBsum" id="8OLT"/>
<dbReference type="PDBsum" id="8OM1"/>
<dbReference type="PDBsum" id="8PW5"/>
<dbReference type="PDBsum" id="8PW6"/>
<dbReference type="PDBsum" id="8PW7"/>
<dbReference type="PDBsum" id="8RGP"/>
<dbReference type="PDBsum" id="8RGQ"/>
<dbReference type="PDBsum" id="8RGR"/>
<dbReference type="PDBsum" id="8RGT"/>
<dbReference type="PDBsum" id="8UCA"/>
<dbReference type="PDBsum" id="8XNL"/>
<dbReference type="PDBsum" id="8XNM"/>
<dbReference type="PDBsum" id="8XNN"/>
<dbReference type="PDBsum" id="8XNO"/>
<dbReference type="PDBsum" id="8XNP"/>
<dbReference type="PDBsum" id="8XNQ"/>
<dbReference type="PDBsum" id="8XNR"/>
<dbReference type="PDBsum" id="8XNS"/>
<dbReference type="PDBsum" id="8XNT"/>
<dbReference type="PDBsum" id="8XNU"/>
<dbReference type="PDBsum" id="8XNV"/>
<dbReference type="PDBsum" id="8XNW"/>
<dbReference type="PDBsum" id="8XNX"/>
<dbReference type="PDBsum" id="8XNY"/>
<dbReference type="PDBsum" id="8XNZ"/>
<dbReference type="PDBsum" id="8XO0"/>
<dbReference type="EMDB" id="EMD-11377"/>
<dbReference type="EMDB" id="EMD-11424"/>
<dbReference type="EMDB" id="EMD-11810"/>
<dbReference type="EMDB" id="EMD-11811"/>
<dbReference type="EMDB" id="EMD-12095"/>
<dbReference type="EMDB" id="EMD-13611"/>
<dbReference type="EMDB" id="EMD-16398"/>
<dbReference type="EMDB" id="EMD-16516"/>
<dbReference type="EMDB" id="EMD-16518"/>
<dbReference type="EMDB" id="EMD-16962"/>
<dbReference type="EMDB" id="EMD-16965"/>
<dbReference type="EMDB" id="EMD-17989"/>
<dbReference type="EMDB" id="EMD-17990"/>
<dbReference type="EMDB" id="EMD-17991"/>
<dbReference type="EMDB" id="EMD-19145"/>
<dbReference type="EMDB" id="EMD-19146"/>
<dbReference type="EMDB" id="EMD-19147"/>
<dbReference type="EMDB" id="EMD-19148"/>
<dbReference type="EMDB" id="EMD-35313"/>
<dbReference type="EMDB" id="EMD-35314"/>
<dbReference type="EMDB" id="EMD-35331"/>
<dbReference type="EMDB" id="EMD-35332"/>
<dbReference type="EMDB" id="EMD-35336"/>
<dbReference type="EMDB" id="EMD-35337"/>
<dbReference type="EMDB" id="EMD-35340"/>
<dbReference type="EMDB" id="EMD-35341"/>
<dbReference type="EMDB" id="EMD-35352"/>
<dbReference type="EMDB" id="EMD-35353"/>
<dbReference type="EMDB" id="EMD-38506"/>
<dbReference type="EMDB" id="EMD-38507"/>
<dbReference type="EMDB" id="EMD-38508"/>
<dbReference type="EMDB" id="EMD-38509"/>
<dbReference type="EMDB" id="EMD-38510"/>
<dbReference type="EMDB" id="EMD-38511"/>
<dbReference type="EMDB" id="EMD-38512"/>
<dbReference type="EMDB" id="EMD-38513"/>
<dbReference type="EMDB" id="EMD-38514"/>
<dbReference type="EMDB" id="EMD-38515"/>
<dbReference type="EMDB" id="EMD-38516"/>
<dbReference type="EMDB" id="EMD-38517"/>
<dbReference type="EMDB" id="EMD-38518"/>
<dbReference type="EMDB" id="EMD-38519"/>
<dbReference type="EMDB" id="EMD-38520"/>
<dbReference type="EMDB" id="EMD-38521"/>
<dbReference type="EMDB" id="EMD-42122"/>
<dbReference type="EMDB" id="EMD-4345"/>
<dbReference type="EMDB" id="EMD-4356"/>
<dbReference type="SMR" id="Q9ERS2"/>
<dbReference type="BioGRID" id="212001">
    <property type="interactions" value="13"/>
</dbReference>
<dbReference type="ComplexPortal" id="CPX-266">
    <property type="entry name" value="Mitochondrial respiratory chain complex I"/>
</dbReference>
<dbReference type="CORUM" id="Q9ERS2"/>
<dbReference type="FunCoup" id="Q9ERS2">
    <property type="interactions" value="2771"/>
</dbReference>
<dbReference type="IntAct" id="Q9ERS2">
    <property type="interactions" value="9"/>
</dbReference>
<dbReference type="MINT" id="Q9ERS2"/>
<dbReference type="STRING" id="10090.ENSMUSP00000105796"/>
<dbReference type="GlyGen" id="Q9ERS2">
    <property type="glycosylation" value="1 site, 1 O-linked glycan (1 site)"/>
</dbReference>
<dbReference type="iPTMnet" id="Q9ERS2"/>
<dbReference type="MetOSite" id="Q9ERS2"/>
<dbReference type="PhosphoSitePlus" id="Q9ERS2"/>
<dbReference type="SwissPalm" id="Q9ERS2"/>
<dbReference type="jPOST" id="Q9ERS2"/>
<dbReference type="PaxDb" id="10090-ENSMUSP00000105796"/>
<dbReference type="PeptideAtlas" id="Q9ERS2"/>
<dbReference type="ProteomicsDB" id="293642"/>
<dbReference type="Pumba" id="Q9ERS2"/>
<dbReference type="Antibodypedia" id="28492">
    <property type="antibodies" value="291 antibodies from 37 providers"/>
</dbReference>
<dbReference type="DNASU" id="67184"/>
<dbReference type="Ensembl" id="ENSMUST00000110167.5">
    <property type="protein sequence ID" value="ENSMUSP00000105796.4"/>
    <property type="gene ID" value="ENSMUSG00000036199.10"/>
</dbReference>
<dbReference type="GeneID" id="67184"/>
<dbReference type="KEGG" id="mmu:67184"/>
<dbReference type="UCSC" id="uc009lyd.1">
    <property type="organism name" value="mouse"/>
</dbReference>
<dbReference type="AGR" id="MGI:1914434"/>
<dbReference type="CTD" id="51079"/>
<dbReference type="MGI" id="MGI:1914434">
    <property type="gene designation" value="Ndufa13"/>
</dbReference>
<dbReference type="VEuPathDB" id="HostDB:ENSMUSG00000036199"/>
<dbReference type="eggNOG" id="KOG3300">
    <property type="taxonomic scope" value="Eukaryota"/>
</dbReference>
<dbReference type="GeneTree" id="ENSGT00390000000719"/>
<dbReference type="HOGENOM" id="CLU_119720_0_0_1"/>
<dbReference type="InParanoid" id="Q9ERS2"/>
<dbReference type="OMA" id="YGIREQH"/>
<dbReference type="OrthoDB" id="3308at2759"/>
<dbReference type="PhylomeDB" id="Q9ERS2"/>
<dbReference type="TreeFam" id="TF315182"/>
<dbReference type="Reactome" id="R-MMU-611105">
    <property type="pathway name" value="Respiratory electron transport"/>
</dbReference>
<dbReference type="Reactome" id="R-MMU-6799198">
    <property type="pathway name" value="Complex I biogenesis"/>
</dbReference>
<dbReference type="Reactome" id="R-MMU-9837999">
    <property type="pathway name" value="Mitochondrial protein degradation"/>
</dbReference>
<dbReference type="BioGRID-ORCS" id="67184">
    <property type="hits" value="28 hits in 79 CRISPR screens"/>
</dbReference>
<dbReference type="CD-CODE" id="CE726F99">
    <property type="entry name" value="Postsynaptic density"/>
</dbReference>
<dbReference type="ChiTaRS" id="Ndufa13">
    <property type="organism name" value="mouse"/>
</dbReference>
<dbReference type="PRO" id="PR:Q9ERS2"/>
<dbReference type="Proteomes" id="UP000000589">
    <property type="component" value="Chromosome 8"/>
</dbReference>
<dbReference type="RNAct" id="Q9ERS2">
    <property type="molecule type" value="protein"/>
</dbReference>
<dbReference type="Bgee" id="ENSMUSG00000036199">
    <property type="expression patterns" value="Expressed in interventricular septum and 139 other cell types or tissues"/>
</dbReference>
<dbReference type="GO" id="GO:0005737">
    <property type="term" value="C:cytoplasm"/>
    <property type="evidence" value="ECO:0000250"/>
    <property type="project" value="UniProtKB"/>
</dbReference>
<dbReference type="GO" id="GO:0005743">
    <property type="term" value="C:mitochondrial inner membrane"/>
    <property type="evidence" value="ECO:0000314"/>
    <property type="project" value="UniProtKB"/>
</dbReference>
<dbReference type="GO" id="GO:0005739">
    <property type="term" value="C:mitochondrion"/>
    <property type="evidence" value="ECO:0000314"/>
    <property type="project" value="UniProtKB"/>
</dbReference>
<dbReference type="GO" id="GO:0005654">
    <property type="term" value="C:nucleoplasm"/>
    <property type="evidence" value="ECO:0000250"/>
    <property type="project" value="UniProtKB"/>
</dbReference>
<dbReference type="GO" id="GO:0005634">
    <property type="term" value="C:nucleus"/>
    <property type="evidence" value="ECO:0000314"/>
    <property type="project" value="MGI"/>
</dbReference>
<dbReference type="GO" id="GO:0098803">
    <property type="term" value="C:respiratory chain complex"/>
    <property type="evidence" value="ECO:0000250"/>
    <property type="project" value="UniProtKB"/>
</dbReference>
<dbReference type="GO" id="GO:0045271">
    <property type="term" value="C:respiratory chain complex I"/>
    <property type="evidence" value="ECO:0000314"/>
    <property type="project" value="UniProtKB"/>
</dbReference>
<dbReference type="GO" id="GO:0005524">
    <property type="term" value="F:ATP binding"/>
    <property type="evidence" value="ECO:0000304"/>
    <property type="project" value="MGI"/>
</dbReference>
<dbReference type="GO" id="GO:0009060">
    <property type="term" value="P:aerobic respiration"/>
    <property type="evidence" value="ECO:0000303"/>
    <property type="project" value="ComplexPortal"/>
</dbReference>
<dbReference type="GO" id="GO:0035458">
    <property type="term" value="P:cellular response to interferon-beta"/>
    <property type="evidence" value="ECO:0007669"/>
    <property type="project" value="Ensembl"/>
</dbReference>
<dbReference type="GO" id="GO:0071300">
    <property type="term" value="P:cellular response to retinoic acid"/>
    <property type="evidence" value="ECO:0007669"/>
    <property type="project" value="Ensembl"/>
</dbReference>
<dbReference type="GO" id="GO:0097191">
    <property type="term" value="P:extrinsic apoptotic signaling pathway"/>
    <property type="evidence" value="ECO:0000314"/>
    <property type="project" value="MGI"/>
</dbReference>
<dbReference type="GO" id="GO:0032981">
    <property type="term" value="P:mitochondrial respiratory chain complex I assembly"/>
    <property type="evidence" value="ECO:0007669"/>
    <property type="project" value="Ensembl"/>
</dbReference>
<dbReference type="GO" id="GO:0045892">
    <property type="term" value="P:negative regulation of DNA-templated transcription"/>
    <property type="evidence" value="ECO:0000250"/>
    <property type="project" value="UniProtKB"/>
</dbReference>
<dbReference type="GO" id="GO:1900119">
    <property type="term" value="P:positive regulation of execution phase of apoptosis"/>
    <property type="evidence" value="ECO:0007669"/>
    <property type="project" value="Ensembl"/>
</dbReference>
<dbReference type="GO" id="GO:0045732">
    <property type="term" value="P:positive regulation of protein catabolic process"/>
    <property type="evidence" value="ECO:0007669"/>
    <property type="project" value="Ensembl"/>
</dbReference>
<dbReference type="GO" id="GO:0045039">
    <property type="term" value="P:protein insertion into mitochondrial inner membrane"/>
    <property type="evidence" value="ECO:0007669"/>
    <property type="project" value="Ensembl"/>
</dbReference>
<dbReference type="GO" id="GO:0042776">
    <property type="term" value="P:proton motive force-driven mitochondrial ATP synthesis"/>
    <property type="evidence" value="ECO:0000303"/>
    <property type="project" value="ComplexPortal"/>
</dbReference>
<dbReference type="InterPro" id="IPR009346">
    <property type="entry name" value="GRIM-19"/>
</dbReference>
<dbReference type="PANTHER" id="PTHR12966:SF0">
    <property type="entry name" value="NADH DEHYDROGENASE [UBIQUINONE] 1 ALPHA SUBCOMPLEX SUBUNIT 13"/>
    <property type="match status" value="1"/>
</dbReference>
<dbReference type="PANTHER" id="PTHR12966">
    <property type="entry name" value="NADH DEHYDROGENASE UBIQUINONE 1 ALPHA SUBCOMPLEX SUBUNIT 13"/>
    <property type="match status" value="1"/>
</dbReference>
<dbReference type="Pfam" id="PF06212">
    <property type="entry name" value="GRIM-19"/>
    <property type="match status" value="1"/>
</dbReference>
<comment type="function">
    <text evidence="5">Accessory subunit of the mitochondrial membrane respiratory chain NADH dehydrogenase (Complex I), that is believed not to be involved in catalysis. Complex I functions in the transfer of electrons from NADH to the respiratory chain. The immediate electron acceptor for the enzyme is believed to be ubiquinone. Involved in the interferon/all-trans-retinoic acid (IFN/RA) induced cell death. This apoptotic activity is inhibited by interaction with viral IRF1. Prevents the transactivation of STAT3 target genes. May play a role in CARD15-mediated innate mucosal responses and serve to regulate intestinal epithelial cell responses to microbes.</text>
</comment>
<comment type="subunit">
    <text evidence="2 5">Complex I is composed of 45 different subunits (PubMed:38575788). Interacts with CARD15, but not with CARD4 (By similarity). Interacts with STAT3, but not with STAT1, STAT2 and STAT5A. Interacts with OLFM4 (By similarity).</text>
</comment>
<comment type="subcellular location">
    <subcellularLocation>
        <location evidence="5 7">Mitochondrion inner membrane</location>
        <topology evidence="5 7">Single-pass membrane protein</topology>
        <orientation evidence="5 7">Matrix side</orientation>
    </subcellularLocation>
    <subcellularLocation>
        <location evidence="4">Nucleus</location>
    </subcellularLocation>
    <text evidence="2">Localizes mainly in the mitochondrion. May be translocated into the nucleus upon IFN/RA treatment.</text>
</comment>
<comment type="similarity">
    <text evidence="6">Belongs to the complex I NDUFA13 subunit family.</text>
</comment>
<comment type="sequence caution" evidence="6">
    <conflict type="erroneous initiation">
        <sequence resource="EMBL-CDS" id="BAB22505"/>
    </conflict>
</comment>
<proteinExistence type="evidence at protein level"/>
<reference key="1">
    <citation type="journal article" date="2000" name="J. Biol. Chem.">
        <title>Identification of GRIM-19, a novel cell death-regulatory gene induced by the interferon-beta and retinoic acid combination, using a genetic approach.</title>
        <authorList>
            <person name="Angell J.E."/>
            <person name="Lindner D.J."/>
            <person name="Shapiro P.S."/>
            <person name="Hofmann E.R."/>
            <person name="Kalvakolanu D.V."/>
        </authorList>
    </citation>
    <scope>NUCLEOTIDE SEQUENCE [MRNA]</scope>
</reference>
<reference key="2">
    <citation type="journal article" date="2005" name="Science">
        <title>The transcriptional landscape of the mammalian genome.</title>
        <authorList>
            <person name="Carninci P."/>
            <person name="Kasukawa T."/>
            <person name="Katayama S."/>
            <person name="Gough J."/>
            <person name="Frith M.C."/>
            <person name="Maeda N."/>
            <person name="Oyama R."/>
            <person name="Ravasi T."/>
            <person name="Lenhard B."/>
            <person name="Wells C."/>
            <person name="Kodzius R."/>
            <person name="Shimokawa K."/>
            <person name="Bajic V.B."/>
            <person name="Brenner S.E."/>
            <person name="Batalov S."/>
            <person name="Forrest A.R."/>
            <person name="Zavolan M."/>
            <person name="Davis M.J."/>
            <person name="Wilming L.G."/>
            <person name="Aidinis V."/>
            <person name="Allen J.E."/>
            <person name="Ambesi-Impiombato A."/>
            <person name="Apweiler R."/>
            <person name="Aturaliya R.N."/>
            <person name="Bailey T.L."/>
            <person name="Bansal M."/>
            <person name="Baxter L."/>
            <person name="Beisel K.W."/>
            <person name="Bersano T."/>
            <person name="Bono H."/>
            <person name="Chalk A.M."/>
            <person name="Chiu K.P."/>
            <person name="Choudhary V."/>
            <person name="Christoffels A."/>
            <person name="Clutterbuck D.R."/>
            <person name="Crowe M.L."/>
            <person name="Dalla E."/>
            <person name="Dalrymple B.P."/>
            <person name="de Bono B."/>
            <person name="Della Gatta G."/>
            <person name="di Bernardo D."/>
            <person name="Down T."/>
            <person name="Engstrom P."/>
            <person name="Fagiolini M."/>
            <person name="Faulkner G."/>
            <person name="Fletcher C.F."/>
            <person name="Fukushima T."/>
            <person name="Furuno M."/>
            <person name="Futaki S."/>
            <person name="Gariboldi M."/>
            <person name="Georgii-Hemming P."/>
            <person name="Gingeras T.R."/>
            <person name="Gojobori T."/>
            <person name="Green R.E."/>
            <person name="Gustincich S."/>
            <person name="Harbers M."/>
            <person name="Hayashi Y."/>
            <person name="Hensch T.K."/>
            <person name="Hirokawa N."/>
            <person name="Hill D."/>
            <person name="Huminiecki L."/>
            <person name="Iacono M."/>
            <person name="Ikeo K."/>
            <person name="Iwama A."/>
            <person name="Ishikawa T."/>
            <person name="Jakt M."/>
            <person name="Kanapin A."/>
            <person name="Katoh M."/>
            <person name="Kawasawa Y."/>
            <person name="Kelso J."/>
            <person name="Kitamura H."/>
            <person name="Kitano H."/>
            <person name="Kollias G."/>
            <person name="Krishnan S.P."/>
            <person name="Kruger A."/>
            <person name="Kummerfeld S.K."/>
            <person name="Kurochkin I.V."/>
            <person name="Lareau L.F."/>
            <person name="Lazarevic D."/>
            <person name="Lipovich L."/>
            <person name="Liu J."/>
            <person name="Liuni S."/>
            <person name="McWilliam S."/>
            <person name="Madan Babu M."/>
            <person name="Madera M."/>
            <person name="Marchionni L."/>
            <person name="Matsuda H."/>
            <person name="Matsuzawa S."/>
            <person name="Miki H."/>
            <person name="Mignone F."/>
            <person name="Miyake S."/>
            <person name="Morris K."/>
            <person name="Mottagui-Tabar S."/>
            <person name="Mulder N."/>
            <person name="Nakano N."/>
            <person name="Nakauchi H."/>
            <person name="Ng P."/>
            <person name="Nilsson R."/>
            <person name="Nishiguchi S."/>
            <person name="Nishikawa S."/>
            <person name="Nori F."/>
            <person name="Ohara O."/>
            <person name="Okazaki Y."/>
            <person name="Orlando V."/>
            <person name="Pang K.C."/>
            <person name="Pavan W.J."/>
            <person name="Pavesi G."/>
            <person name="Pesole G."/>
            <person name="Petrovsky N."/>
            <person name="Piazza S."/>
            <person name="Reed J."/>
            <person name="Reid J.F."/>
            <person name="Ring B.Z."/>
            <person name="Ringwald M."/>
            <person name="Rost B."/>
            <person name="Ruan Y."/>
            <person name="Salzberg S.L."/>
            <person name="Sandelin A."/>
            <person name="Schneider C."/>
            <person name="Schoenbach C."/>
            <person name="Sekiguchi K."/>
            <person name="Semple C.A."/>
            <person name="Seno S."/>
            <person name="Sessa L."/>
            <person name="Sheng Y."/>
            <person name="Shibata Y."/>
            <person name="Shimada H."/>
            <person name="Shimada K."/>
            <person name="Silva D."/>
            <person name="Sinclair B."/>
            <person name="Sperling S."/>
            <person name="Stupka E."/>
            <person name="Sugiura K."/>
            <person name="Sultana R."/>
            <person name="Takenaka Y."/>
            <person name="Taki K."/>
            <person name="Tammoja K."/>
            <person name="Tan S.L."/>
            <person name="Tang S."/>
            <person name="Taylor M.S."/>
            <person name="Tegner J."/>
            <person name="Teichmann S.A."/>
            <person name="Ueda H.R."/>
            <person name="van Nimwegen E."/>
            <person name="Verardo R."/>
            <person name="Wei C.L."/>
            <person name="Yagi K."/>
            <person name="Yamanishi H."/>
            <person name="Zabarovsky E."/>
            <person name="Zhu S."/>
            <person name="Zimmer A."/>
            <person name="Hide W."/>
            <person name="Bult C."/>
            <person name="Grimmond S.M."/>
            <person name="Teasdale R.D."/>
            <person name="Liu E.T."/>
            <person name="Brusic V."/>
            <person name="Quackenbush J."/>
            <person name="Wahlestedt C."/>
            <person name="Mattick J.S."/>
            <person name="Hume D.A."/>
            <person name="Kai C."/>
            <person name="Sasaki D."/>
            <person name="Tomaru Y."/>
            <person name="Fukuda S."/>
            <person name="Kanamori-Katayama M."/>
            <person name="Suzuki M."/>
            <person name="Aoki J."/>
            <person name="Arakawa T."/>
            <person name="Iida J."/>
            <person name="Imamura K."/>
            <person name="Itoh M."/>
            <person name="Kato T."/>
            <person name="Kawaji H."/>
            <person name="Kawagashira N."/>
            <person name="Kawashima T."/>
            <person name="Kojima M."/>
            <person name="Kondo S."/>
            <person name="Konno H."/>
            <person name="Nakano K."/>
            <person name="Ninomiya N."/>
            <person name="Nishio T."/>
            <person name="Okada M."/>
            <person name="Plessy C."/>
            <person name="Shibata K."/>
            <person name="Shiraki T."/>
            <person name="Suzuki S."/>
            <person name="Tagami M."/>
            <person name="Waki K."/>
            <person name="Watahiki A."/>
            <person name="Okamura-Oho Y."/>
            <person name="Suzuki H."/>
            <person name="Kawai J."/>
            <person name="Hayashizaki Y."/>
        </authorList>
    </citation>
    <scope>NUCLEOTIDE SEQUENCE [LARGE SCALE MRNA]</scope>
    <source>
        <strain>C57BL/6J</strain>
        <tissue>Brain</tissue>
        <tissue>Embryo</tissue>
    </source>
</reference>
<reference key="3">
    <citation type="journal article" date="2004" name="Genome Res.">
        <title>The status, quality, and expansion of the NIH full-length cDNA project: the Mammalian Gene Collection (MGC).</title>
        <authorList>
            <consortium name="The MGC Project Team"/>
        </authorList>
    </citation>
    <scope>NUCLEOTIDE SEQUENCE [LARGE SCALE MRNA]</scope>
    <source>
        <strain>C57BL/6J</strain>
        <strain>FVB/N</strain>
        <tissue>Colon</tissue>
        <tissue>Thymus</tissue>
    </source>
</reference>
<reference key="4">
    <citation type="submission" date="2007-04" db="UniProtKB">
        <authorList>
            <person name="Lubec G."/>
            <person name="Kang S.U."/>
        </authorList>
    </citation>
    <scope>PROTEIN SEQUENCE OF 6-22; 59-81; 89-99 AND 106-128</scope>
    <scope>IDENTIFICATION BY MASS SPECTROMETRY</scope>
    <source>
        <strain>C57BL/6J</strain>
        <tissue>Brain</tissue>
    </source>
</reference>
<reference key="5">
    <citation type="journal article" date="2003" name="EMBO J.">
        <title>GRIM-19, a death-regulatory gene product, suppresses Stat3 activity via functional interaction.</title>
        <authorList>
            <person name="Lufei C."/>
            <person name="Ma J."/>
            <person name="Huang G."/>
            <person name="Zhang T."/>
            <person name="Novotny-Diermayr V."/>
            <person name="Ong C.T."/>
            <person name="Cao X."/>
        </authorList>
    </citation>
    <scope>INTERACTION WITH STAT3</scope>
    <scope>SUBCELLULAR LOCATION</scope>
</reference>
<reference key="6">
    <citation type="journal article" date="2003" name="Proc. Natl. Acad. Sci. U.S.A.">
        <title>The cell death regulator GRIM-19 is an inhibitor of signal transducer and activator of transcription 3.</title>
        <authorList>
            <person name="Zhang J."/>
            <person name="Yang J."/>
            <person name="Roy S.K."/>
            <person name="Tininini S."/>
            <person name="Hu J."/>
            <person name="Bromberg J.F."/>
            <person name="Poli V."/>
            <person name="Stark G.R."/>
            <person name="Kalvakolanu D.V."/>
        </authorList>
    </citation>
    <scope>INTERACTION WITH STAT3</scope>
</reference>
<reference key="7">
    <citation type="journal article" date="2010" name="Cell">
        <title>A tissue-specific atlas of mouse protein phosphorylation and expression.</title>
        <authorList>
            <person name="Huttlin E.L."/>
            <person name="Jedrychowski M.P."/>
            <person name="Elias J.E."/>
            <person name="Goswami T."/>
            <person name="Rad R."/>
            <person name="Beausoleil S.A."/>
            <person name="Villen J."/>
            <person name="Haas W."/>
            <person name="Sowa M.E."/>
            <person name="Gygi S.P."/>
        </authorList>
    </citation>
    <scope>IDENTIFICATION BY MASS SPECTROMETRY [LARGE SCALE ANALYSIS]</scope>
    <source>
        <tissue>Brain</tissue>
        <tissue>Brown adipose tissue</tissue>
        <tissue>Heart</tissue>
        <tissue>Kidney</tissue>
        <tissue>Liver</tissue>
        <tissue>Lung</tissue>
        <tissue>Pancreas</tissue>
        <tissue>Spleen</tissue>
        <tissue>Testis</tissue>
    </source>
</reference>
<reference evidence="8" key="8">
    <citation type="journal article" date="2024" name="Nat. Struct. Mol. Biol.">
        <title>SCAF1 drives the compositional diversity of mammalian respirasomes.</title>
        <authorList>
            <person name="Vercellino I."/>
            <person name="Sazanov L.A."/>
        </authorList>
    </citation>
    <scope>STRUCTURE BY ELECTRON MICROSCOPY (3.60 ANGSTROMS) IN COMPLEX WITH MITOCHONDRIAL RESPIRATORY SUPERCOMPLEX</scope>
    <scope>FUNCTION</scope>
    <scope>SUBCELLULAR LOCATION</scope>
    <scope>SUBUNIT</scope>
</reference>
<name>NDUAD_MOUSE</name>
<organism>
    <name type="scientific">Mus musculus</name>
    <name type="common">Mouse</name>
    <dbReference type="NCBI Taxonomy" id="10090"/>
    <lineage>
        <taxon>Eukaryota</taxon>
        <taxon>Metazoa</taxon>
        <taxon>Chordata</taxon>
        <taxon>Craniata</taxon>
        <taxon>Vertebrata</taxon>
        <taxon>Euteleostomi</taxon>
        <taxon>Mammalia</taxon>
        <taxon>Eutheria</taxon>
        <taxon>Euarchontoglires</taxon>
        <taxon>Glires</taxon>
        <taxon>Rodentia</taxon>
        <taxon>Myomorpha</taxon>
        <taxon>Muroidea</taxon>
        <taxon>Muridae</taxon>
        <taxon>Murinae</taxon>
        <taxon>Mus</taxon>
        <taxon>Mus</taxon>
    </lineage>
</organism>
<protein>
    <recommendedName>
        <fullName>NADH dehydrogenase [ubiquinone] 1 alpha subcomplex subunit 13</fullName>
    </recommendedName>
    <alternativeName>
        <fullName>Cell death regulatory protein GRIM-19</fullName>
    </alternativeName>
    <alternativeName>
        <fullName>Complex I-B16.6</fullName>
        <shortName>CI-B16.6</shortName>
    </alternativeName>
    <alternativeName>
        <fullName>Gene associated with retinoic and interferon-induced mortality 19 protein</fullName>
        <shortName>GRIM-19</shortName>
        <shortName>Gene associated with retinoic and IFN-induced mortality 19 protein</shortName>
    </alternativeName>
    <alternativeName>
        <fullName>NADH-ubiquinone oxidoreductase B16.6 subunit</fullName>
    </alternativeName>
</protein>
<feature type="initiator methionine" description="Removed" evidence="1">
    <location>
        <position position="1"/>
    </location>
</feature>
<feature type="chain" id="PRO_0000118805" description="NADH dehydrogenase [ubiquinone] 1 alpha subcomplex subunit 13">
    <location>
        <begin position="2"/>
        <end position="144"/>
    </location>
</feature>
<feature type="transmembrane region" description="Helical" evidence="3">
    <location>
        <begin position="30"/>
        <end position="51"/>
    </location>
</feature>
<feature type="modified residue" description="N-acetylalanine" evidence="1">
    <location>
        <position position="2"/>
    </location>
</feature>
<feature type="sequence conflict" description="In Ref. 2; BAB22505." evidence="6" ref="2">
    <original>SKV</original>
    <variation>TTI</variation>
    <location>
        <begin position="4"/>
        <end position="6"/>
    </location>
</feature>
<feature type="sequence conflict" description="In Ref. 2; BAB22505." evidence="6" ref="2">
    <original>GG</original>
    <variation>EE</variation>
    <location>
        <begin position="14"/>
        <end position="15"/>
    </location>
</feature>
<feature type="helix" evidence="10">
    <location>
        <begin position="32"/>
        <end position="97"/>
    </location>
</feature>
<feature type="turn" evidence="10">
    <location>
        <begin position="98"/>
        <end position="100"/>
    </location>
</feature>
<feature type="strand" evidence="9">
    <location>
        <begin position="101"/>
        <end position="103"/>
    </location>
</feature>
<feature type="strand" evidence="11">
    <location>
        <begin position="106"/>
        <end position="108"/>
    </location>
</feature>
<feature type="strand" evidence="10">
    <location>
        <begin position="110"/>
        <end position="112"/>
    </location>
</feature>
<feature type="helix" evidence="10">
    <location>
        <begin position="121"/>
        <end position="124"/>
    </location>
</feature>
<feature type="turn" evidence="10">
    <location>
        <begin position="125"/>
        <end position="127"/>
    </location>
</feature>
<feature type="helix" evidence="10">
    <location>
        <begin position="130"/>
        <end position="138"/>
    </location>
</feature>
<feature type="turn" evidence="10">
    <location>
        <begin position="139"/>
        <end position="142"/>
    </location>
</feature>